<keyword id="KW-0963">Cytoplasm</keyword>
<keyword id="KW-0521">NADP</keyword>
<keyword id="KW-0560">Oxidoreductase</keyword>
<keyword id="KW-0671">Queuosine biosynthesis</keyword>
<keyword id="KW-1185">Reference proteome</keyword>
<accession>A8AP02</accession>
<protein>
    <recommendedName>
        <fullName evidence="1">NADPH-dependent 7-cyano-7-deazaguanine reductase</fullName>
        <ecNumber evidence="1">1.7.1.13</ecNumber>
    </recommendedName>
    <alternativeName>
        <fullName evidence="1">7-cyano-7-carbaguanine reductase</fullName>
    </alternativeName>
    <alternativeName>
        <fullName evidence="1">NADPH-dependent nitrile oxidoreductase</fullName>
    </alternativeName>
    <alternativeName>
        <fullName evidence="1">PreQ(0) reductase</fullName>
    </alternativeName>
</protein>
<evidence type="ECO:0000255" key="1">
    <source>
        <dbReference type="HAMAP-Rule" id="MF_00817"/>
    </source>
</evidence>
<gene>
    <name evidence="1" type="primary">queF</name>
    <name type="ordered locus">CKO_04150</name>
</gene>
<dbReference type="EC" id="1.7.1.13" evidence="1"/>
<dbReference type="EMBL" id="CP000822">
    <property type="protein sequence ID" value="ABV15215.1"/>
    <property type="molecule type" value="Genomic_DNA"/>
</dbReference>
<dbReference type="RefSeq" id="WP_012134904.1">
    <property type="nucleotide sequence ID" value="NC_009792.1"/>
</dbReference>
<dbReference type="SMR" id="A8AP02"/>
<dbReference type="STRING" id="290338.CKO_04150"/>
<dbReference type="GeneID" id="45137781"/>
<dbReference type="KEGG" id="cko:CKO_04150"/>
<dbReference type="HOGENOM" id="CLU_054738_0_0_6"/>
<dbReference type="OrthoDB" id="9789995at2"/>
<dbReference type="UniPathway" id="UPA00392"/>
<dbReference type="Proteomes" id="UP000008148">
    <property type="component" value="Chromosome"/>
</dbReference>
<dbReference type="GO" id="GO:0005737">
    <property type="term" value="C:cytoplasm"/>
    <property type="evidence" value="ECO:0007669"/>
    <property type="project" value="UniProtKB-SubCell"/>
</dbReference>
<dbReference type="GO" id="GO:0033739">
    <property type="term" value="F:preQ1 synthase activity"/>
    <property type="evidence" value="ECO:0007669"/>
    <property type="project" value="UniProtKB-UniRule"/>
</dbReference>
<dbReference type="GO" id="GO:0008616">
    <property type="term" value="P:queuosine biosynthetic process"/>
    <property type="evidence" value="ECO:0007669"/>
    <property type="project" value="UniProtKB-UniRule"/>
</dbReference>
<dbReference type="GO" id="GO:0006400">
    <property type="term" value="P:tRNA modification"/>
    <property type="evidence" value="ECO:0007669"/>
    <property type="project" value="UniProtKB-UniRule"/>
</dbReference>
<dbReference type="FunFam" id="3.30.1130.10:FF:000004">
    <property type="entry name" value="NADPH-dependent 7-cyano-7-deazaguanine reductase"/>
    <property type="match status" value="1"/>
</dbReference>
<dbReference type="Gene3D" id="3.30.1130.10">
    <property type="match status" value="2"/>
</dbReference>
<dbReference type="HAMAP" id="MF_00817">
    <property type="entry name" value="QueF_type2"/>
    <property type="match status" value="1"/>
</dbReference>
<dbReference type="InterPro" id="IPR043133">
    <property type="entry name" value="GTP-CH-I_C/QueF"/>
</dbReference>
<dbReference type="InterPro" id="IPR050084">
    <property type="entry name" value="NADPH_dep_7-cyano-7-deazaG_red"/>
</dbReference>
<dbReference type="InterPro" id="IPR029500">
    <property type="entry name" value="QueF"/>
</dbReference>
<dbReference type="InterPro" id="IPR029139">
    <property type="entry name" value="QueF_N"/>
</dbReference>
<dbReference type="InterPro" id="IPR016428">
    <property type="entry name" value="QueF_type2"/>
</dbReference>
<dbReference type="NCBIfam" id="TIGR03138">
    <property type="entry name" value="QueF"/>
    <property type="match status" value="1"/>
</dbReference>
<dbReference type="PANTHER" id="PTHR34354">
    <property type="entry name" value="NADPH-DEPENDENT 7-CYANO-7-DEAZAGUANINE REDUCTASE"/>
    <property type="match status" value="1"/>
</dbReference>
<dbReference type="PANTHER" id="PTHR34354:SF1">
    <property type="entry name" value="NADPH-DEPENDENT 7-CYANO-7-DEAZAGUANINE REDUCTASE"/>
    <property type="match status" value="1"/>
</dbReference>
<dbReference type="Pfam" id="PF14489">
    <property type="entry name" value="QueF"/>
    <property type="match status" value="1"/>
</dbReference>
<dbReference type="Pfam" id="PF14819">
    <property type="entry name" value="QueF_N"/>
    <property type="match status" value="1"/>
</dbReference>
<dbReference type="PIRSF" id="PIRSF004750">
    <property type="entry name" value="Nitrile_oxidored_YqcD_prd"/>
    <property type="match status" value="1"/>
</dbReference>
<dbReference type="SUPFAM" id="SSF55620">
    <property type="entry name" value="Tetrahydrobiopterin biosynthesis enzymes-like"/>
    <property type="match status" value="1"/>
</dbReference>
<organism>
    <name type="scientific">Citrobacter koseri (strain ATCC BAA-895 / CDC 4225-83 / SGSC4696)</name>
    <dbReference type="NCBI Taxonomy" id="290338"/>
    <lineage>
        <taxon>Bacteria</taxon>
        <taxon>Pseudomonadati</taxon>
        <taxon>Pseudomonadota</taxon>
        <taxon>Gammaproteobacteria</taxon>
        <taxon>Enterobacterales</taxon>
        <taxon>Enterobacteriaceae</taxon>
        <taxon>Citrobacter</taxon>
    </lineage>
</organism>
<proteinExistence type="inferred from homology"/>
<sequence length="282" mass="32479">MSSYENHQALDGLTLGKSTDYRDNYDASLLQGVPRSLNRDPLDLKADNLPFHGADIWTLYELSWLNAKGVPQVAVGHVELDYTSVNLIESKSFKLYLNSFNQTRFDSWDAVRQTLENDLRACAQGEVSVALYRLDELEGQPAAHFHGTCIDDQDITIDNYQFSTDYLENAASGEKVVEETLVSHLLKSNCLITHQPDWGSIQICYRGRKIDREKLLRYLVSFRHHNEFHEQCVERIFNDLLRFCQPEKLSVYARYTRRGGLDINPWRSNTDFVPATGRLVRQ</sequence>
<name>QUEF_CITK8</name>
<feature type="chain" id="PRO_1000062337" description="NADPH-dependent 7-cyano-7-deazaguanine reductase">
    <location>
        <begin position="1"/>
        <end position="282"/>
    </location>
</feature>
<feature type="active site" description="Thioimide intermediate" evidence="1">
    <location>
        <position position="190"/>
    </location>
</feature>
<feature type="active site" description="Proton donor" evidence="1">
    <location>
        <position position="197"/>
    </location>
</feature>
<feature type="binding site" evidence="1">
    <location>
        <begin position="88"/>
        <end position="90"/>
    </location>
    <ligand>
        <name>substrate</name>
    </ligand>
</feature>
<feature type="binding site" evidence="1">
    <location>
        <begin position="90"/>
        <end position="91"/>
    </location>
    <ligand>
        <name>NADPH</name>
        <dbReference type="ChEBI" id="CHEBI:57783"/>
    </ligand>
</feature>
<feature type="binding site" evidence="1">
    <location>
        <begin position="229"/>
        <end position="230"/>
    </location>
    <ligand>
        <name>substrate</name>
    </ligand>
</feature>
<feature type="binding site" evidence="1">
    <location>
        <begin position="258"/>
        <end position="259"/>
    </location>
    <ligand>
        <name>NADPH</name>
        <dbReference type="ChEBI" id="CHEBI:57783"/>
    </ligand>
</feature>
<reference key="1">
    <citation type="submission" date="2007-08" db="EMBL/GenBank/DDBJ databases">
        <authorList>
            <consortium name="The Citrobacter koseri Genome Sequencing Project"/>
            <person name="McClelland M."/>
            <person name="Sanderson E.K."/>
            <person name="Porwollik S."/>
            <person name="Spieth J."/>
            <person name="Clifton W.S."/>
            <person name="Latreille P."/>
            <person name="Courtney L."/>
            <person name="Wang C."/>
            <person name="Pepin K."/>
            <person name="Bhonagiri V."/>
            <person name="Nash W."/>
            <person name="Johnson M."/>
            <person name="Thiruvilangam P."/>
            <person name="Wilson R."/>
        </authorList>
    </citation>
    <scope>NUCLEOTIDE SEQUENCE [LARGE SCALE GENOMIC DNA]</scope>
    <source>
        <strain>ATCC BAA-895 / CDC 4225-83 / SGSC4696</strain>
    </source>
</reference>
<comment type="function">
    <text evidence="1">Catalyzes the NADPH-dependent reduction of 7-cyano-7-deazaguanine (preQ0) to 7-aminomethyl-7-deazaguanine (preQ1).</text>
</comment>
<comment type="catalytic activity">
    <reaction evidence="1">
        <text>7-aminomethyl-7-carbaguanine + 2 NADP(+) = 7-cyano-7-deazaguanine + 2 NADPH + 3 H(+)</text>
        <dbReference type="Rhea" id="RHEA:13409"/>
        <dbReference type="ChEBI" id="CHEBI:15378"/>
        <dbReference type="ChEBI" id="CHEBI:45075"/>
        <dbReference type="ChEBI" id="CHEBI:57783"/>
        <dbReference type="ChEBI" id="CHEBI:58349"/>
        <dbReference type="ChEBI" id="CHEBI:58703"/>
        <dbReference type="EC" id="1.7.1.13"/>
    </reaction>
</comment>
<comment type="pathway">
    <text evidence="1">tRNA modification; tRNA-queuosine biosynthesis.</text>
</comment>
<comment type="subunit">
    <text evidence="1">Homodimer.</text>
</comment>
<comment type="subcellular location">
    <subcellularLocation>
        <location evidence="1">Cytoplasm</location>
    </subcellularLocation>
</comment>
<comment type="similarity">
    <text evidence="1">Belongs to the GTP cyclohydrolase I family. QueF type 2 subfamily.</text>
</comment>